<evidence type="ECO:0000255" key="1">
    <source>
        <dbReference type="HAMAP-Rule" id="MF_01347"/>
    </source>
</evidence>
<dbReference type="EC" id="7.1.2.2" evidence="1"/>
<dbReference type="EMBL" id="CP000414">
    <property type="protein sequence ID" value="ABJ62943.1"/>
    <property type="molecule type" value="Genomic_DNA"/>
</dbReference>
<dbReference type="RefSeq" id="WP_002815624.1">
    <property type="nucleotide sequence ID" value="NC_008531.1"/>
</dbReference>
<dbReference type="SMR" id="Q03V29"/>
<dbReference type="EnsemblBacteria" id="ABJ62943">
    <property type="protein sequence ID" value="ABJ62943"/>
    <property type="gene ID" value="LEUM_1869"/>
</dbReference>
<dbReference type="GeneID" id="29577593"/>
<dbReference type="KEGG" id="lme:LEUM_1869"/>
<dbReference type="eggNOG" id="COG0055">
    <property type="taxonomic scope" value="Bacteria"/>
</dbReference>
<dbReference type="HOGENOM" id="CLU_022398_0_2_9"/>
<dbReference type="Proteomes" id="UP000000362">
    <property type="component" value="Chromosome"/>
</dbReference>
<dbReference type="GO" id="GO:0005886">
    <property type="term" value="C:plasma membrane"/>
    <property type="evidence" value="ECO:0007669"/>
    <property type="project" value="UniProtKB-SubCell"/>
</dbReference>
<dbReference type="GO" id="GO:0045259">
    <property type="term" value="C:proton-transporting ATP synthase complex"/>
    <property type="evidence" value="ECO:0007669"/>
    <property type="project" value="UniProtKB-KW"/>
</dbReference>
<dbReference type="GO" id="GO:0005524">
    <property type="term" value="F:ATP binding"/>
    <property type="evidence" value="ECO:0007669"/>
    <property type="project" value="UniProtKB-UniRule"/>
</dbReference>
<dbReference type="GO" id="GO:0016887">
    <property type="term" value="F:ATP hydrolysis activity"/>
    <property type="evidence" value="ECO:0007669"/>
    <property type="project" value="InterPro"/>
</dbReference>
<dbReference type="GO" id="GO:0046933">
    <property type="term" value="F:proton-transporting ATP synthase activity, rotational mechanism"/>
    <property type="evidence" value="ECO:0007669"/>
    <property type="project" value="UniProtKB-UniRule"/>
</dbReference>
<dbReference type="CDD" id="cd18110">
    <property type="entry name" value="ATP-synt_F1_beta_C"/>
    <property type="match status" value="1"/>
</dbReference>
<dbReference type="CDD" id="cd18115">
    <property type="entry name" value="ATP-synt_F1_beta_N"/>
    <property type="match status" value="1"/>
</dbReference>
<dbReference type="CDD" id="cd01133">
    <property type="entry name" value="F1-ATPase_beta_CD"/>
    <property type="match status" value="1"/>
</dbReference>
<dbReference type="FunFam" id="1.10.1140.10:FF:000001">
    <property type="entry name" value="ATP synthase subunit beta"/>
    <property type="match status" value="1"/>
</dbReference>
<dbReference type="FunFam" id="2.40.10.170:FF:000005">
    <property type="entry name" value="ATP synthase subunit beta"/>
    <property type="match status" value="1"/>
</dbReference>
<dbReference type="FunFam" id="3.40.50.300:FF:000004">
    <property type="entry name" value="ATP synthase subunit beta"/>
    <property type="match status" value="1"/>
</dbReference>
<dbReference type="Gene3D" id="2.40.10.170">
    <property type="match status" value="1"/>
</dbReference>
<dbReference type="Gene3D" id="1.10.1140.10">
    <property type="entry name" value="Bovine Mitochondrial F1-atpase, Atp Synthase Beta Chain, Chain D, domain 3"/>
    <property type="match status" value="1"/>
</dbReference>
<dbReference type="Gene3D" id="3.40.50.300">
    <property type="entry name" value="P-loop containing nucleotide triphosphate hydrolases"/>
    <property type="match status" value="1"/>
</dbReference>
<dbReference type="HAMAP" id="MF_01347">
    <property type="entry name" value="ATP_synth_beta_bact"/>
    <property type="match status" value="1"/>
</dbReference>
<dbReference type="InterPro" id="IPR003593">
    <property type="entry name" value="AAA+_ATPase"/>
</dbReference>
<dbReference type="InterPro" id="IPR055190">
    <property type="entry name" value="ATP-synt_VA_C"/>
</dbReference>
<dbReference type="InterPro" id="IPR005722">
    <property type="entry name" value="ATP_synth_F1_bsu"/>
</dbReference>
<dbReference type="InterPro" id="IPR020003">
    <property type="entry name" value="ATPase_a/bsu_AS"/>
</dbReference>
<dbReference type="InterPro" id="IPR050053">
    <property type="entry name" value="ATPase_alpha/beta_chains"/>
</dbReference>
<dbReference type="InterPro" id="IPR004100">
    <property type="entry name" value="ATPase_F1/V1/A1_a/bsu_N"/>
</dbReference>
<dbReference type="InterPro" id="IPR036121">
    <property type="entry name" value="ATPase_F1/V1/A1_a/bsu_N_sf"/>
</dbReference>
<dbReference type="InterPro" id="IPR000194">
    <property type="entry name" value="ATPase_F1/V1/A1_a/bsu_nucl-bd"/>
</dbReference>
<dbReference type="InterPro" id="IPR024034">
    <property type="entry name" value="ATPase_F1/V1_b/a_C"/>
</dbReference>
<dbReference type="InterPro" id="IPR027417">
    <property type="entry name" value="P-loop_NTPase"/>
</dbReference>
<dbReference type="NCBIfam" id="TIGR01039">
    <property type="entry name" value="atpD"/>
    <property type="match status" value="1"/>
</dbReference>
<dbReference type="PANTHER" id="PTHR15184">
    <property type="entry name" value="ATP SYNTHASE"/>
    <property type="match status" value="1"/>
</dbReference>
<dbReference type="PANTHER" id="PTHR15184:SF71">
    <property type="entry name" value="ATP SYNTHASE SUBUNIT BETA, MITOCHONDRIAL"/>
    <property type="match status" value="1"/>
</dbReference>
<dbReference type="Pfam" id="PF00006">
    <property type="entry name" value="ATP-synt_ab"/>
    <property type="match status" value="1"/>
</dbReference>
<dbReference type="Pfam" id="PF02874">
    <property type="entry name" value="ATP-synt_ab_N"/>
    <property type="match status" value="1"/>
</dbReference>
<dbReference type="Pfam" id="PF22919">
    <property type="entry name" value="ATP-synt_VA_C"/>
    <property type="match status" value="1"/>
</dbReference>
<dbReference type="SMART" id="SM00382">
    <property type="entry name" value="AAA"/>
    <property type="match status" value="1"/>
</dbReference>
<dbReference type="SUPFAM" id="SSF47917">
    <property type="entry name" value="C-terminal domain of alpha and beta subunits of F1 ATP synthase"/>
    <property type="match status" value="1"/>
</dbReference>
<dbReference type="SUPFAM" id="SSF50615">
    <property type="entry name" value="N-terminal domain of alpha and beta subunits of F1 ATP synthase"/>
    <property type="match status" value="1"/>
</dbReference>
<dbReference type="SUPFAM" id="SSF52540">
    <property type="entry name" value="P-loop containing nucleoside triphosphate hydrolases"/>
    <property type="match status" value="1"/>
</dbReference>
<dbReference type="PROSITE" id="PS00152">
    <property type="entry name" value="ATPASE_ALPHA_BETA"/>
    <property type="match status" value="1"/>
</dbReference>
<organism>
    <name type="scientific">Leuconostoc mesenteroides subsp. mesenteroides (strain ATCC 8293 / DSM 20343 / BCRC 11652 / CCM 1803 / JCM 6124 / NCDO 523 / NBRC 100496 / NCIMB 8023 / NCTC 12954 / NRRL B-1118 / 37Y)</name>
    <dbReference type="NCBI Taxonomy" id="203120"/>
    <lineage>
        <taxon>Bacteria</taxon>
        <taxon>Bacillati</taxon>
        <taxon>Bacillota</taxon>
        <taxon>Bacilli</taxon>
        <taxon>Lactobacillales</taxon>
        <taxon>Lactobacillaceae</taxon>
        <taxon>Leuconostoc</taxon>
    </lineage>
</organism>
<gene>
    <name evidence="1" type="primary">atpD</name>
    <name type="ordered locus">LEUM_1869</name>
</gene>
<proteinExistence type="inferred from homology"/>
<protein>
    <recommendedName>
        <fullName evidence="1">ATP synthase subunit beta</fullName>
        <ecNumber evidence="1">7.1.2.2</ecNumber>
    </recommendedName>
    <alternativeName>
        <fullName evidence="1">ATP synthase F1 sector subunit beta</fullName>
    </alternativeName>
    <alternativeName>
        <fullName evidence="1">F-ATPase subunit beta</fullName>
    </alternativeName>
</protein>
<keyword id="KW-0066">ATP synthesis</keyword>
<keyword id="KW-0067">ATP-binding</keyword>
<keyword id="KW-1003">Cell membrane</keyword>
<keyword id="KW-0139">CF(1)</keyword>
<keyword id="KW-0375">Hydrogen ion transport</keyword>
<keyword id="KW-0406">Ion transport</keyword>
<keyword id="KW-0472">Membrane</keyword>
<keyword id="KW-0547">Nucleotide-binding</keyword>
<keyword id="KW-1185">Reference proteome</keyword>
<keyword id="KW-1278">Translocase</keyword>
<keyword id="KW-0813">Transport</keyword>
<accession>Q03V29</accession>
<name>ATPB_LEUMM</name>
<sequence length="466" mass="50309">MSTGKVVQVIGPVVDIAFEAGQQVPDINNALVIDKGNGQSLTVEVSLALGDGVVRTIAMDSTDGLQRGMGVVDTGNPIEVPVGEATLGRVFNVLGEPVDNNGAIASDVRRSSIHRDAPKYDELTSSTEILETGIKVIDLLAPYVRGGKIGLFGGAGVGKTVLIQELIHNIAQGHNGISVFTGVGERTREGNDMYHEMEESGVLKQTAMVYGQMNEPPGARMRVALTGLTMAENFRDNEGKDVLLFIDNIFRFTQAGSEVSALLGRIPSAVGYQPTLATEMGQLQERITSTKKGSVTSIQAVYVPADDYTDPAPATTFAHLDATTNLERALTQQGIYPAVDPLASTSSALDPQIVGQEHYEVATEVQRTLQRYRELQDIISILGMDELSDEEKTTVNRARRIQFFLSQPFSVAETFTGINGEYVPVAETVRSFKEILDGKYDDLPEDAFRNVGAIEQVVEKAKTMAQ</sequence>
<comment type="function">
    <text evidence="1">Produces ATP from ADP in the presence of a proton gradient across the membrane. The catalytic sites are hosted primarily by the beta subunits.</text>
</comment>
<comment type="catalytic activity">
    <reaction evidence="1">
        <text>ATP + H2O + 4 H(+)(in) = ADP + phosphate + 5 H(+)(out)</text>
        <dbReference type="Rhea" id="RHEA:57720"/>
        <dbReference type="ChEBI" id="CHEBI:15377"/>
        <dbReference type="ChEBI" id="CHEBI:15378"/>
        <dbReference type="ChEBI" id="CHEBI:30616"/>
        <dbReference type="ChEBI" id="CHEBI:43474"/>
        <dbReference type="ChEBI" id="CHEBI:456216"/>
        <dbReference type="EC" id="7.1.2.2"/>
    </reaction>
</comment>
<comment type="subunit">
    <text evidence="1">F-type ATPases have 2 components, CF(1) - the catalytic core - and CF(0) - the membrane proton channel. CF(1) has five subunits: alpha(3), beta(3), gamma(1), delta(1), epsilon(1). CF(0) has three main subunits: a(1), b(2) and c(9-12). The alpha and beta chains form an alternating ring which encloses part of the gamma chain. CF(1) is attached to CF(0) by a central stalk formed by the gamma and epsilon chains, while a peripheral stalk is formed by the delta and b chains.</text>
</comment>
<comment type="subcellular location">
    <subcellularLocation>
        <location evidence="1">Cell membrane</location>
        <topology evidence="1">Peripheral membrane protein</topology>
    </subcellularLocation>
</comment>
<comment type="similarity">
    <text evidence="1">Belongs to the ATPase alpha/beta chains family.</text>
</comment>
<reference key="1">
    <citation type="journal article" date="2006" name="Proc. Natl. Acad. Sci. U.S.A.">
        <title>Comparative genomics of the lactic acid bacteria.</title>
        <authorList>
            <person name="Makarova K.S."/>
            <person name="Slesarev A."/>
            <person name="Wolf Y.I."/>
            <person name="Sorokin A."/>
            <person name="Mirkin B."/>
            <person name="Koonin E.V."/>
            <person name="Pavlov A."/>
            <person name="Pavlova N."/>
            <person name="Karamychev V."/>
            <person name="Polouchine N."/>
            <person name="Shakhova V."/>
            <person name="Grigoriev I."/>
            <person name="Lou Y."/>
            <person name="Rohksar D."/>
            <person name="Lucas S."/>
            <person name="Huang K."/>
            <person name="Goodstein D.M."/>
            <person name="Hawkins T."/>
            <person name="Plengvidhya V."/>
            <person name="Welker D."/>
            <person name="Hughes J."/>
            <person name="Goh Y."/>
            <person name="Benson A."/>
            <person name="Baldwin K."/>
            <person name="Lee J.-H."/>
            <person name="Diaz-Muniz I."/>
            <person name="Dosti B."/>
            <person name="Smeianov V."/>
            <person name="Wechter W."/>
            <person name="Barabote R."/>
            <person name="Lorca G."/>
            <person name="Altermann E."/>
            <person name="Barrangou R."/>
            <person name="Ganesan B."/>
            <person name="Xie Y."/>
            <person name="Rawsthorne H."/>
            <person name="Tamir D."/>
            <person name="Parker C."/>
            <person name="Breidt F."/>
            <person name="Broadbent J.R."/>
            <person name="Hutkins R."/>
            <person name="O'Sullivan D."/>
            <person name="Steele J."/>
            <person name="Unlu G."/>
            <person name="Saier M.H. Jr."/>
            <person name="Klaenhammer T."/>
            <person name="Richardson P."/>
            <person name="Kozyavkin S."/>
            <person name="Weimer B.C."/>
            <person name="Mills D.A."/>
        </authorList>
    </citation>
    <scope>NUCLEOTIDE SEQUENCE [LARGE SCALE GENOMIC DNA]</scope>
    <source>
        <strain>ATCC 8293 / DSM 20343 / BCRC 11652 / CCM 1803 / JCM 6124 / NCDO 523 / NBRC 100496 / NCIMB 8023 / NCTC 12954 / NRRL B-1118 / 37Y</strain>
    </source>
</reference>
<feature type="chain" id="PRO_1000055132" description="ATP synthase subunit beta">
    <location>
        <begin position="1"/>
        <end position="466"/>
    </location>
</feature>
<feature type="binding site" evidence="1">
    <location>
        <begin position="153"/>
        <end position="160"/>
    </location>
    <ligand>
        <name>ATP</name>
        <dbReference type="ChEBI" id="CHEBI:30616"/>
    </ligand>
</feature>